<proteinExistence type="inferred from homology"/>
<sequence length="944" mass="106001">MSDYKSTLNLPKTGFPMRANLANREPNMLKNWYSNDLYGKIRAAKKGKKTFILHDGPPYANGDIHIGHSVNKILKDIIIKSKTLSDFDAPYIPGWDCHGLPIELKVEQKVGKPGKKISAAEFRKKCREYAARQVDGQRKDFKRLGVLGEWDKPYLTMDFGTEANIVRALAQVIKNDHLHKGSKPVHWCTECGSALAEAEVEYEDKLSPAIDVAFSAVDNEQVLNCFSAVTDNLGEGNVSAVIWTTTPWTLPANRAIALAQKVEYSLVQAGERRLIIATDLVADCLKRYGNEDFSTLAICKGIDLEKQLFNHPFLDLQVPAILADYVTVDAGTGCVHTAPGHGQDDYAVGLRYDLEVANYVADNGVFRDDTEFFAGLHVFKANDRVLEVLAERNALLCSIKLNHSYPHCWRHKTPIIFRATPQWFIAMDQKSLRADALAEIQAVKWIPSWGQQRIEKMVENRPDWCISRQRTWGVPITLFVHKETDELHPNSVEMMELIARKIEIDGIQAWWDLEPETLLGFEAEEYRKVTDTLDVWFDSGTTHASVVAKREEYTLESGEQAAADMYLEGSDQHRGWFQSSLMTSMAINNKAPYKEVLTHGFVVDGNGKKMSKSLGNVMSPQTVMNNLGADILRLWVASTDYTGEMTVSDEILNRSADSYRRIRNTSRFLLANLNGFDPTTDLVPNEEMVALDRWIVAQTLILQNDVIEAYESYSLHAVYQKLTHFCSIELGSFYLDIIKDRQYTAKADSNAHRSCQTALFHIAEALVRLMAPILSFTADEIWARLPGARDEFVFTTVWYDGLFSLSDNEALSSAAWSKLTLVRAEVNKALEIARKENAIGGGLEAEVILYASDEIATLLTTLEDELRFVLITSQAQVKPLADAPQLALKTEVTGLLVSVVKSAAPKCERCWHHREEVGQNKQHPELCGRCVTNIEGQGEIRKFA</sequence>
<reference key="1">
    <citation type="journal article" date="2008" name="BMC Genomics">
        <title>Genomics of an extreme psychrophile, Psychromonas ingrahamii.</title>
        <authorList>
            <person name="Riley M."/>
            <person name="Staley J.T."/>
            <person name="Danchin A."/>
            <person name="Wang T.Z."/>
            <person name="Brettin T.S."/>
            <person name="Hauser L.J."/>
            <person name="Land M.L."/>
            <person name="Thompson L.S."/>
        </authorList>
    </citation>
    <scope>NUCLEOTIDE SEQUENCE [LARGE SCALE GENOMIC DNA]</scope>
    <source>
        <strain>DSM 17664 / CCUG 51855 / 37</strain>
    </source>
</reference>
<accession>A1SZP3</accession>
<dbReference type="EC" id="6.1.1.5" evidence="1"/>
<dbReference type="EMBL" id="CP000510">
    <property type="protein sequence ID" value="ABM04958.1"/>
    <property type="molecule type" value="Genomic_DNA"/>
</dbReference>
<dbReference type="RefSeq" id="WP_011771510.1">
    <property type="nucleotide sequence ID" value="NC_008709.1"/>
</dbReference>
<dbReference type="SMR" id="A1SZP3"/>
<dbReference type="STRING" id="357804.Ping_3271"/>
<dbReference type="KEGG" id="pin:Ping_3271"/>
<dbReference type="eggNOG" id="COG0060">
    <property type="taxonomic scope" value="Bacteria"/>
</dbReference>
<dbReference type="HOGENOM" id="CLU_001493_7_1_6"/>
<dbReference type="OrthoDB" id="9810365at2"/>
<dbReference type="Proteomes" id="UP000000639">
    <property type="component" value="Chromosome"/>
</dbReference>
<dbReference type="GO" id="GO:0005829">
    <property type="term" value="C:cytosol"/>
    <property type="evidence" value="ECO:0007669"/>
    <property type="project" value="TreeGrafter"/>
</dbReference>
<dbReference type="GO" id="GO:0002161">
    <property type="term" value="F:aminoacyl-tRNA deacylase activity"/>
    <property type="evidence" value="ECO:0007669"/>
    <property type="project" value="InterPro"/>
</dbReference>
<dbReference type="GO" id="GO:0005524">
    <property type="term" value="F:ATP binding"/>
    <property type="evidence" value="ECO:0007669"/>
    <property type="project" value="UniProtKB-UniRule"/>
</dbReference>
<dbReference type="GO" id="GO:0004822">
    <property type="term" value="F:isoleucine-tRNA ligase activity"/>
    <property type="evidence" value="ECO:0007669"/>
    <property type="project" value="UniProtKB-UniRule"/>
</dbReference>
<dbReference type="GO" id="GO:0000049">
    <property type="term" value="F:tRNA binding"/>
    <property type="evidence" value="ECO:0007669"/>
    <property type="project" value="InterPro"/>
</dbReference>
<dbReference type="GO" id="GO:0008270">
    <property type="term" value="F:zinc ion binding"/>
    <property type="evidence" value="ECO:0007669"/>
    <property type="project" value="UniProtKB-UniRule"/>
</dbReference>
<dbReference type="GO" id="GO:0006428">
    <property type="term" value="P:isoleucyl-tRNA aminoacylation"/>
    <property type="evidence" value="ECO:0007669"/>
    <property type="project" value="UniProtKB-UniRule"/>
</dbReference>
<dbReference type="CDD" id="cd07960">
    <property type="entry name" value="Anticodon_Ia_Ile_BEm"/>
    <property type="match status" value="1"/>
</dbReference>
<dbReference type="CDD" id="cd00818">
    <property type="entry name" value="IleRS_core"/>
    <property type="match status" value="1"/>
</dbReference>
<dbReference type="FunFam" id="1.10.730.20:FF:000001">
    <property type="entry name" value="Isoleucine--tRNA ligase"/>
    <property type="match status" value="1"/>
</dbReference>
<dbReference type="FunFam" id="3.40.50.620:FF:000042">
    <property type="entry name" value="Isoleucine--tRNA ligase"/>
    <property type="match status" value="1"/>
</dbReference>
<dbReference type="FunFam" id="3.40.50.620:FF:000048">
    <property type="entry name" value="Isoleucine--tRNA ligase"/>
    <property type="match status" value="1"/>
</dbReference>
<dbReference type="Gene3D" id="1.10.730.20">
    <property type="match status" value="1"/>
</dbReference>
<dbReference type="Gene3D" id="3.40.50.620">
    <property type="entry name" value="HUPs"/>
    <property type="match status" value="2"/>
</dbReference>
<dbReference type="Gene3D" id="3.90.740.10">
    <property type="entry name" value="Valyl/Leucyl/Isoleucyl-tRNA synthetase, editing domain"/>
    <property type="match status" value="1"/>
</dbReference>
<dbReference type="HAMAP" id="MF_02002">
    <property type="entry name" value="Ile_tRNA_synth_type1"/>
    <property type="match status" value="1"/>
</dbReference>
<dbReference type="InterPro" id="IPR001412">
    <property type="entry name" value="aa-tRNA-synth_I_CS"/>
</dbReference>
<dbReference type="InterPro" id="IPR002300">
    <property type="entry name" value="aa-tRNA-synth_Ia"/>
</dbReference>
<dbReference type="InterPro" id="IPR033708">
    <property type="entry name" value="Anticodon_Ile_BEm"/>
</dbReference>
<dbReference type="InterPro" id="IPR002301">
    <property type="entry name" value="Ile-tRNA-ligase"/>
</dbReference>
<dbReference type="InterPro" id="IPR023585">
    <property type="entry name" value="Ile-tRNA-ligase_type1"/>
</dbReference>
<dbReference type="InterPro" id="IPR050081">
    <property type="entry name" value="Ile-tRNA_ligase"/>
</dbReference>
<dbReference type="InterPro" id="IPR013155">
    <property type="entry name" value="M/V/L/I-tRNA-synth_anticd-bd"/>
</dbReference>
<dbReference type="InterPro" id="IPR014729">
    <property type="entry name" value="Rossmann-like_a/b/a_fold"/>
</dbReference>
<dbReference type="InterPro" id="IPR009080">
    <property type="entry name" value="tRNAsynth_Ia_anticodon-bd"/>
</dbReference>
<dbReference type="InterPro" id="IPR009008">
    <property type="entry name" value="Val/Leu/Ile-tRNA-synth_edit"/>
</dbReference>
<dbReference type="InterPro" id="IPR010663">
    <property type="entry name" value="Znf_FPG/IleRS"/>
</dbReference>
<dbReference type="NCBIfam" id="TIGR00392">
    <property type="entry name" value="ileS"/>
    <property type="match status" value="1"/>
</dbReference>
<dbReference type="PANTHER" id="PTHR42765:SF1">
    <property type="entry name" value="ISOLEUCINE--TRNA LIGASE, MITOCHONDRIAL"/>
    <property type="match status" value="1"/>
</dbReference>
<dbReference type="PANTHER" id="PTHR42765">
    <property type="entry name" value="SOLEUCYL-TRNA SYNTHETASE"/>
    <property type="match status" value="1"/>
</dbReference>
<dbReference type="Pfam" id="PF08264">
    <property type="entry name" value="Anticodon_1"/>
    <property type="match status" value="1"/>
</dbReference>
<dbReference type="Pfam" id="PF00133">
    <property type="entry name" value="tRNA-synt_1"/>
    <property type="match status" value="1"/>
</dbReference>
<dbReference type="Pfam" id="PF06827">
    <property type="entry name" value="zf-FPG_IleRS"/>
    <property type="match status" value="1"/>
</dbReference>
<dbReference type="PRINTS" id="PR00984">
    <property type="entry name" value="TRNASYNTHILE"/>
</dbReference>
<dbReference type="SUPFAM" id="SSF47323">
    <property type="entry name" value="Anticodon-binding domain of a subclass of class I aminoacyl-tRNA synthetases"/>
    <property type="match status" value="1"/>
</dbReference>
<dbReference type="SUPFAM" id="SSF52374">
    <property type="entry name" value="Nucleotidylyl transferase"/>
    <property type="match status" value="1"/>
</dbReference>
<dbReference type="SUPFAM" id="SSF50677">
    <property type="entry name" value="ValRS/IleRS/LeuRS editing domain"/>
    <property type="match status" value="1"/>
</dbReference>
<dbReference type="PROSITE" id="PS00178">
    <property type="entry name" value="AA_TRNA_LIGASE_I"/>
    <property type="match status" value="1"/>
</dbReference>
<organism>
    <name type="scientific">Psychromonas ingrahamii (strain DSM 17664 / CCUG 51855 / 37)</name>
    <dbReference type="NCBI Taxonomy" id="357804"/>
    <lineage>
        <taxon>Bacteria</taxon>
        <taxon>Pseudomonadati</taxon>
        <taxon>Pseudomonadota</taxon>
        <taxon>Gammaproteobacteria</taxon>
        <taxon>Alteromonadales</taxon>
        <taxon>Psychromonadaceae</taxon>
        <taxon>Psychromonas</taxon>
    </lineage>
</organism>
<evidence type="ECO:0000255" key="1">
    <source>
        <dbReference type="HAMAP-Rule" id="MF_02002"/>
    </source>
</evidence>
<gene>
    <name evidence="1" type="primary">ileS</name>
    <name type="ordered locus">Ping_3271</name>
</gene>
<feature type="chain" id="PRO_1000022110" description="Isoleucine--tRNA ligase">
    <location>
        <begin position="1"/>
        <end position="944"/>
    </location>
</feature>
<feature type="short sequence motif" description="'HIGH' region">
    <location>
        <begin position="58"/>
        <end position="68"/>
    </location>
</feature>
<feature type="short sequence motif" description="'KMSKS' region">
    <location>
        <begin position="609"/>
        <end position="613"/>
    </location>
</feature>
<feature type="binding site" evidence="1">
    <location>
        <position position="568"/>
    </location>
    <ligand>
        <name>L-isoleucyl-5'-AMP</name>
        <dbReference type="ChEBI" id="CHEBI:178002"/>
    </ligand>
</feature>
<feature type="binding site" evidence="1">
    <location>
        <position position="612"/>
    </location>
    <ligand>
        <name>ATP</name>
        <dbReference type="ChEBI" id="CHEBI:30616"/>
    </ligand>
</feature>
<feature type="binding site" evidence="1">
    <location>
        <position position="907"/>
    </location>
    <ligand>
        <name>Zn(2+)</name>
        <dbReference type="ChEBI" id="CHEBI:29105"/>
    </ligand>
</feature>
<feature type="binding site" evidence="1">
    <location>
        <position position="910"/>
    </location>
    <ligand>
        <name>Zn(2+)</name>
        <dbReference type="ChEBI" id="CHEBI:29105"/>
    </ligand>
</feature>
<feature type="binding site" evidence="1">
    <location>
        <position position="927"/>
    </location>
    <ligand>
        <name>Zn(2+)</name>
        <dbReference type="ChEBI" id="CHEBI:29105"/>
    </ligand>
</feature>
<feature type="binding site" evidence="1">
    <location>
        <position position="930"/>
    </location>
    <ligand>
        <name>Zn(2+)</name>
        <dbReference type="ChEBI" id="CHEBI:29105"/>
    </ligand>
</feature>
<comment type="function">
    <text evidence="1">Catalyzes the attachment of isoleucine to tRNA(Ile). As IleRS can inadvertently accommodate and process structurally similar amino acids such as valine, to avoid such errors it has two additional distinct tRNA(Ile)-dependent editing activities. One activity is designated as 'pretransfer' editing and involves the hydrolysis of activated Val-AMP. The other activity is designated 'posttransfer' editing and involves deacylation of mischarged Val-tRNA(Ile).</text>
</comment>
<comment type="catalytic activity">
    <reaction evidence="1">
        <text>tRNA(Ile) + L-isoleucine + ATP = L-isoleucyl-tRNA(Ile) + AMP + diphosphate</text>
        <dbReference type="Rhea" id="RHEA:11060"/>
        <dbReference type="Rhea" id="RHEA-COMP:9666"/>
        <dbReference type="Rhea" id="RHEA-COMP:9695"/>
        <dbReference type="ChEBI" id="CHEBI:30616"/>
        <dbReference type="ChEBI" id="CHEBI:33019"/>
        <dbReference type="ChEBI" id="CHEBI:58045"/>
        <dbReference type="ChEBI" id="CHEBI:78442"/>
        <dbReference type="ChEBI" id="CHEBI:78528"/>
        <dbReference type="ChEBI" id="CHEBI:456215"/>
        <dbReference type="EC" id="6.1.1.5"/>
    </reaction>
</comment>
<comment type="cofactor">
    <cofactor evidence="1">
        <name>Zn(2+)</name>
        <dbReference type="ChEBI" id="CHEBI:29105"/>
    </cofactor>
    <text evidence="1">Binds 1 zinc ion per subunit.</text>
</comment>
<comment type="subunit">
    <text evidence="1">Monomer.</text>
</comment>
<comment type="subcellular location">
    <subcellularLocation>
        <location evidence="1">Cytoplasm</location>
    </subcellularLocation>
</comment>
<comment type="domain">
    <text evidence="1">IleRS has two distinct active sites: one for aminoacylation and one for editing. The misactivated valine is translocated from the active site to the editing site, which sterically excludes the correctly activated isoleucine. The single editing site contains two valyl binding pockets, one specific for each substrate (Val-AMP or Val-tRNA(Ile)).</text>
</comment>
<comment type="similarity">
    <text evidence="1">Belongs to the class-I aminoacyl-tRNA synthetase family. IleS type 1 subfamily.</text>
</comment>
<name>SYI_PSYIN</name>
<protein>
    <recommendedName>
        <fullName evidence="1">Isoleucine--tRNA ligase</fullName>
        <ecNumber evidence="1">6.1.1.5</ecNumber>
    </recommendedName>
    <alternativeName>
        <fullName evidence="1">Isoleucyl-tRNA synthetase</fullName>
        <shortName evidence="1">IleRS</shortName>
    </alternativeName>
</protein>
<keyword id="KW-0030">Aminoacyl-tRNA synthetase</keyword>
<keyword id="KW-0067">ATP-binding</keyword>
<keyword id="KW-0963">Cytoplasm</keyword>
<keyword id="KW-0436">Ligase</keyword>
<keyword id="KW-0479">Metal-binding</keyword>
<keyword id="KW-0547">Nucleotide-binding</keyword>
<keyword id="KW-0648">Protein biosynthesis</keyword>
<keyword id="KW-1185">Reference proteome</keyword>
<keyword id="KW-0862">Zinc</keyword>